<dbReference type="EMBL" id="AM942759">
    <property type="protein sequence ID" value="CAR45503.1"/>
    <property type="molecule type" value="Genomic_DNA"/>
</dbReference>
<dbReference type="RefSeq" id="WP_004246901.1">
    <property type="nucleotide sequence ID" value="NC_010554.1"/>
</dbReference>
<dbReference type="SMR" id="B4EYV3"/>
<dbReference type="EnsemblBacteria" id="CAR45503">
    <property type="protein sequence ID" value="CAR45503"/>
    <property type="gene ID" value="PMI2789"/>
</dbReference>
<dbReference type="GeneID" id="6800555"/>
<dbReference type="KEGG" id="pmr:PMI2789"/>
<dbReference type="eggNOG" id="COG0080">
    <property type="taxonomic scope" value="Bacteria"/>
</dbReference>
<dbReference type="HOGENOM" id="CLU_074237_2_0_6"/>
<dbReference type="Proteomes" id="UP000008319">
    <property type="component" value="Chromosome"/>
</dbReference>
<dbReference type="GO" id="GO:0022625">
    <property type="term" value="C:cytosolic large ribosomal subunit"/>
    <property type="evidence" value="ECO:0007669"/>
    <property type="project" value="TreeGrafter"/>
</dbReference>
<dbReference type="GO" id="GO:0070180">
    <property type="term" value="F:large ribosomal subunit rRNA binding"/>
    <property type="evidence" value="ECO:0007669"/>
    <property type="project" value="UniProtKB-UniRule"/>
</dbReference>
<dbReference type="GO" id="GO:0003735">
    <property type="term" value="F:structural constituent of ribosome"/>
    <property type="evidence" value="ECO:0007669"/>
    <property type="project" value="InterPro"/>
</dbReference>
<dbReference type="GO" id="GO:0006412">
    <property type="term" value="P:translation"/>
    <property type="evidence" value="ECO:0007669"/>
    <property type="project" value="UniProtKB-UniRule"/>
</dbReference>
<dbReference type="CDD" id="cd00349">
    <property type="entry name" value="Ribosomal_L11"/>
    <property type="match status" value="1"/>
</dbReference>
<dbReference type="FunFam" id="1.10.10.250:FF:000001">
    <property type="entry name" value="50S ribosomal protein L11"/>
    <property type="match status" value="1"/>
</dbReference>
<dbReference type="FunFam" id="3.30.1550.10:FF:000001">
    <property type="entry name" value="50S ribosomal protein L11"/>
    <property type="match status" value="1"/>
</dbReference>
<dbReference type="Gene3D" id="1.10.10.250">
    <property type="entry name" value="Ribosomal protein L11, C-terminal domain"/>
    <property type="match status" value="1"/>
</dbReference>
<dbReference type="Gene3D" id="3.30.1550.10">
    <property type="entry name" value="Ribosomal protein L11/L12, N-terminal domain"/>
    <property type="match status" value="1"/>
</dbReference>
<dbReference type="HAMAP" id="MF_00736">
    <property type="entry name" value="Ribosomal_uL11"/>
    <property type="match status" value="1"/>
</dbReference>
<dbReference type="InterPro" id="IPR000911">
    <property type="entry name" value="Ribosomal_uL11"/>
</dbReference>
<dbReference type="InterPro" id="IPR006519">
    <property type="entry name" value="Ribosomal_uL11_bac-typ"/>
</dbReference>
<dbReference type="InterPro" id="IPR020783">
    <property type="entry name" value="Ribosomal_uL11_C"/>
</dbReference>
<dbReference type="InterPro" id="IPR036769">
    <property type="entry name" value="Ribosomal_uL11_C_sf"/>
</dbReference>
<dbReference type="InterPro" id="IPR020785">
    <property type="entry name" value="Ribosomal_uL11_CS"/>
</dbReference>
<dbReference type="InterPro" id="IPR020784">
    <property type="entry name" value="Ribosomal_uL11_N"/>
</dbReference>
<dbReference type="InterPro" id="IPR036796">
    <property type="entry name" value="Ribosomal_uL11_N_sf"/>
</dbReference>
<dbReference type="NCBIfam" id="TIGR01632">
    <property type="entry name" value="L11_bact"/>
    <property type="match status" value="1"/>
</dbReference>
<dbReference type="PANTHER" id="PTHR11661">
    <property type="entry name" value="60S RIBOSOMAL PROTEIN L12"/>
    <property type="match status" value="1"/>
</dbReference>
<dbReference type="PANTHER" id="PTHR11661:SF1">
    <property type="entry name" value="LARGE RIBOSOMAL SUBUNIT PROTEIN UL11M"/>
    <property type="match status" value="1"/>
</dbReference>
<dbReference type="Pfam" id="PF00298">
    <property type="entry name" value="Ribosomal_L11"/>
    <property type="match status" value="1"/>
</dbReference>
<dbReference type="Pfam" id="PF03946">
    <property type="entry name" value="Ribosomal_L11_N"/>
    <property type="match status" value="1"/>
</dbReference>
<dbReference type="SMART" id="SM00649">
    <property type="entry name" value="RL11"/>
    <property type="match status" value="1"/>
</dbReference>
<dbReference type="SUPFAM" id="SSF54747">
    <property type="entry name" value="Ribosomal L11/L12e N-terminal domain"/>
    <property type="match status" value="1"/>
</dbReference>
<dbReference type="SUPFAM" id="SSF46906">
    <property type="entry name" value="Ribosomal protein L11, C-terminal domain"/>
    <property type="match status" value="1"/>
</dbReference>
<dbReference type="PROSITE" id="PS00359">
    <property type="entry name" value="RIBOSOMAL_L11"/>
    <property type="match status" value="1"/>
</dbReference>
<evidence type="ECO:0000255" key="1">
    <source>
        <dbReference type="HAMAP-Rule" id="MF_00736"/>
    </source>
</evidence>
<evidence type="ECO:0000305" key="2"/>
<protein>
    <recommendedName>
        <fullName evidence="1">Large ribosomal subunit protein uL11</fullName>
    </recommendedName>
    <alternativeName>
        <fullName evidence="2">50S ribosomal protein L11</fullName>
    </alternativeName>
</protein>
<organism>
    <name type="scientific">Proteus mirabilis (strain HI4320)</name>
    <dbReference type="NCBI Taxonomy" id="529507"/>
    <lineage>
        <taxon>Bacteria</taxon>
        <taxon>Pseudomonadati</taxon>
        <taxon>Pseudomonadota</taxon>
        <taxon>Gammaproteobacteria</taxon>
        <taxon>Enterobacterales</taxon>
        <taxon>Morganellaceae</taxon>
        <taxon>Proteus</taxon>
    </lineage>
</organism>
<reference key="1">
    <citation type="journal article" date="2008" name="J. Bacteriol.">
        <title>Complete genome sequence of uropathogenic Proteus mirabilis, a master of both adherence and motility.</title>
        <authorList>
            <person name="Pearson M.M."/>
            <person name="Sebaihia M."/>
            <person name="Churcher C."/>
            <person name="Quail M.A."/>
            <person name="Seshasayee A.S."/>
            <person name="Luscombe N.M."/>
            <person name="Abdellah Z."/>
            <person name="Arrosmith C."/>
            <person name="Atkin B."/>
            <person name="Chillingworth T."/>
            <person name="Hauser H."/>
            <person name="Jagels K."/>
            <person name="Moule S."/>
            <person name="Mungall K."/>
            <person name="Norbertczak H."/>
            <person name="Rabbinowitsch E."/>
            <person name="Walker D."/>
            <person name="Whithead S."/>
            <person name="Thomson N.R."/>
            <person name="Rather P.N."/>
            <person name="Parkhill J."/>
            <person name="Mobley H.L.T."/>
        </authorList>
    </citation>
    <scope>NUCLEOTIDE SEQUENCE [LARGE SCALE GENOMIC DNA]</scope>
    <source>
        <strain>HI4320</strain>
    </source>
</reference>
<accession>B4EYV3</accession>
<comment type="function">
    <text evidence="1">Forms part of the ribosomal stalk which helps the ribosome interact with GTP-bound translation factors.</text>
</comment>
<comment type="subunit">
    <text evidence="1">Part of the ribosomal stalk of the 50S ribosomal subunit. Interacts with L10 and the large rRNA to form the base of the stalk. L10 forms an elongated spine to which L12 dimers bind in a sequential fashion forming a multimeric L10(L12)X complex.</text>
</comment>
<comment type="PTM">
    <text evidence="1">One or more lysine residues are methylated.</text>
</comment>
<comment type="similarity">
    <text evidence="1">Belongs to the universal ribosomal protein uL11 family.</text>
</comment>
<name>RL11_PROMH</name>
<gene>
    <name evidence="1" type="primary">rplK</name>
    <name type="ordered locus">PMI2789</name>
</gene>
<sequence>MAKKVQAYIKLQVAAGMANPSPPVGPALGQQGVNIMEFCKAFNAKTESVEKGLPIPVVITVYADRSFTFVTKTPPAAILLKKAAGVKSGSGKPNKEKVGKVTTAQVREIAETKAADLTGADVEAMMRSIEGTARSMGLVVED</sequence>
<keyword id="KW-0488">Methylation</keyword>
<keyword id="KW-1185">Reference proteome</keyword>
<keyword id="KW-0687">Ribonucleoprotein</keyword>
<keyword id="KW-0689">Ribosomal protein</keyword>
<keyword id="KW-0694">RNA-binding</keyword>
<keyword id="KW-0699">rRNA-binding</keyword>
<feature type="chain" id="PRO_1000195693" description="Large ribosomal subunit protein uL11">
    <location>
        <begin position="1"/>
        <end position="142"/>
    </location>
</feature>
<proteinExistence type="inferred from homology"/>